<comment type="catalytic activity">
    <reaction evidence="1">
        <text>D-tagatofuranose 6-phosphate + ATP = D-tagatofuranose 1,6-bisphosphate + ADP + H(+)</text>
        <dbReference type="Rhea" id="RHEA:12420"/>
        <dbReference type="ChEBI" id="CHEBI:15378"/>
        <dbReference type="ChEBI" id="CHEBI:30616"/>
        <dbReference type="ChEBI" id="CHEBI:58694"/>
        <dbReference type="ChEBI" id="CHEBI:58695"/>
        <dbReference type="ChEBI" id="CHEBI:456216"/>
        <dbReference type="EC" id="2.7.1.144"/>
    </reaction>
</comment>
<comment type="pathway">
    <text evidence="1">Carbohydrate metabolism; D-tagatose 6-phosphate degradation; D-glyceraldehyde 3-phosphate and glycerone phosphate from D-tagatose 6-phosphate: step 1/2.</text>
</comment>
<comment type="similarity">
    <text evidence="1">Belongs to the carbohydrate kinase PfkB family. LacC subfamily.</text>
</comment>
<feature type="chain" id="PRO_0000203923" description="Tagatose-6-phosphate kinase">
    <location>
        <begin position="1"/>
        <end position="310"/>
    </location>
</feature>
<name>LACC_STAES</name>
<accession>Q8CRJ4</accession>
<keyword id="KW-0067">ATP-binding</keyword>
<keyword id="KW-0418">Kinase</keyword>
<keyword id="KW-0423">Lactose metabolism</keyword>
<keyword id="KW-0547">Nucleotide-binding</keyword>
<keyword id="KW-0808">Transferase</keyword>
<dbReference type="EC" id="2.7.1.144" evidence="1"/>
<dbReference type="EMBL" id="AE015929">
    <property type="protein sequence ID" value="AAO05426.1"/>
    <property type="molecule type" value="Genomic_DNA"/>
</dbReference>
<dbReference type="RefSeq" id="NP_765340.1">
    <property type="nucleotide sequence ID" value="NC_004461.1"/>
</dbReference>
<dbReference type="RefSeq" id="WP_002468897.1">
    <property type="nucleotide sequence ID" value="NZ_WBME01000007.1"/>
</dbReference>
<dbReference type="SMR" id="Q8CRJ4"/>
<dbReference type="KEGG" id="sep:SE_1785"/>
<dbReference type="PATRIC" id="fig|176280.10.peg.1742"/>
<dbReference type="eggNOG" id="COG1105">
    <property type="taxonomic scope" value="Bacteria"/>
</dbReference>
<dbReference type="HOGENOM" id="CLU_050013_5_0_9"/>
<dbReference type="OrthoDB" id="9801219at2"/>
<dbReference type="UniPathway" id="UPA00704">
    <property type="reaction ID" value="UER00715"/>
</dbReference>
<dbReference type="Proteomes" id="UP000001411">
    <property type="component" value="Chromosome"/>
</dbReference>
<dbReference type="GO" id="GO:0005829">
    <property type="term" value="C:cytosol"/>
    <property type="evidence" value="ECO:0007669"/>
    <property type="project" value="TreeGrafter"/>
</dbReference>
<dbReference type="GO" id="GO:0005524">
    <property type="term" value="F:ATP binding"/>
    <property type="evidence" value="ECO:0007669"/>
    <property type="project" value="UniProtKB-KW"/>
</dbReference>
<dbReference type="GO" id="GO:0008443">
    <property type="term" value="F:phosphofructokinase activity"/>
    <property type="evidence" value="ECO:0007669"/>
    <property type="project" value="TreeGrafter"/>
</dbReference>
<dbReference type="GO" id="GO:0009024">
    <property type="term" value="F:tagatose-6-phosphate kinase activity"/>
    <property type="evidence" value="ECO:0007669"/>
    <property type="project" value="UniProtKB-UniRule"/>
</dbReference>
<dbReference type="GO" id="GO:2001059">
    <property type="term" value="P:D-tagatose 6-phosphate catabolic process"/>
    <property type="evidence" value="ECO:0007669"/>
    <property type="project" value="UniProtKB-UniRule"/>
</dbReference>
<dbReference type="GO" id="GO:0019512">
    <property type="term" value="P:lactose catabolic process via tagatose-6-phosphate"/>
    <property type="evidence" value="ECO:0007669"/>
    <property type="project" value="InterPro"/>
</dbReference>
<dbReference type="CDD" id="cd01164">
    <property type="entry name" value="FruK_PfkB_like"/>
    <property type="match status" value="1"/>
</dbReference>
<dbReference type="FunFam" id="3.40.1190.20:FF:000001">
    <property type="entry name" value="Phosphofructokinase"/>
    <property type="match status" value="1"/>
</dbReference>
<dbReference type="Gene3D" id="3.40.1190.20">
    <property type="match status" value="1"/>
</dbReference>
<dbReference type="HAMAP" id="MF_01557">
    <property type="entry name" value="LacC"/>
    <property type="match status" value="1"/>
</dbReference>
<dbReference type="InterPro" id="IPR002173">
    <property type="entry name" value="Carboh/pur_kinase_PfkB_CS"/>
</dbReference>
<dbReference type="InterPro" id="IPR005926">
    <property type="entry name" value="LacC"/>
</dbReference>
<dbReference type="InterPro" id="IPR011611">
    <property type="entry name" value="PfkB_dom"/>
</dbReference>
<dbReference type="InterPro" id="IPR029056">
    <property type="entry name" value="Ribokinase-like"/>
</dbReference>
<dbReference type="InterPro" id="IPR017583">
    <property type="entry name" value="Tagatose/fructose_Pkinase"/>
</dbReference>
<dbReference type="NCBIfam" id="TIGR03168">
    <property type="entry name" value="1-PFK"/>
    <property type="match status" value="1"/>
</dbReference>
<dbReference type="NCBIfam" id="TIGR01231">
    <property type="entry name" value="lacC"/>
    <property type="match status" value="1"/>
</dbReference>
<dbReference type="NCBIfam" id="NF010033">
    <property type="entry name" value="PRK13508.1"/>
    <property type="match status" value="1"/>
</dbReference>
<dbReference type="PANTHER" id="PTHR46566:SF5">
    <property type="entry name" value="1-PHOSPHOFRUCTOKINASE"/>
    <property type="match status" value="1"/>
</dbReference>
<dbReference type="PANTHER" id="PTHR46566">
    <property type="entry name" value="1-PHOSPHOFRUCTOKINASE-RELATED"/>
    <property type="match status" value="1"/>
</dbReference>
<dbReference type="Pfam" id="PF00294">
    <property type="entry name" value="PfkB"/>
    <property type="match status" value="1"/>
</dbReference>
<dbReference type="PIRSF" id="PIRSF000535">
    <property type="entry name" value="1PFK/6PFK/LacC"/>
    <property type="match status" value="1"/>
</dbReference>
<dbReference type="SUPFAM" id="SSF53613">
    <property type="entry name" value="Ribokinase-like"/>
    <property type="match status" value="1"/>
</dbReference>
<dbReference type="PROSITE" id="PS00583">
    <property type="entry name" value="PFKB_KINASES_1"/>
    <property type="match status" value="1"/>
</dbReference>
<dbReference type="PROSITE" id="PS00584">
    <property type="entry name" value="PFKB_KINASES_2"/>
    <property type="match status" value="1"/>
</dbReference>
<gene>
    <name evidence="1" type="primary">lacC</name>
    <name type="ordered locus">SE_1785</name>
</gene>
<reference key="1">
    <citation type="journal article" date="2003" name="Mol. Microbiol.">
        <title>Genome-based analysis of virulence genes in a non-biofilm-forming Staphylococcus epidermidis strain (ATCC 12228).</title>
        <authorList>
            <person name="Zhang Y.-Q."/>
            <person name="Ren S.-X."/>
            <person name="Li H.-L."/>
            <person name="Wang Y.-X."/>
            <person name="Fu G."/>
            <person name="Yang J."/>
            <person name="Qin Z.-Q."/>
            <person name="Miao Y.-G."/>
            <person name="Wang W.-Y."/>
            <person name="Chen R.-S."/>
            <person name="Shen Y."/>
            <person name="Chen Z."/>
            <person name="Yuan Z.-H."/>
            <person name="Zhao G.-P."/>
            <person name="Qu D."/>
            <person name="Danchin A."/>
            <person name="Wen Y.-M."/>
        </authorList>
    </citation>
    <scope>NUCLEOTIDE SEQUENCE [LARGE SCALE GENOMIC DNA]</scope>
    <source>
        <strain>ATCC 12228 / FDA PCI 1200</strain>
    </source>
</reference>
<sequence length="310" mass="34229">MILTLTLNPSVDISYPLDQFNLDTVNRVSQTSKTAGGKGLNVTRVLSEFGEDVIASGFLGGALGQYIEEQIETTRIKQAFFKIKGETRNCIAILHEGQQTEILEKGPTIELKESEEFKSHLLKLFKETDVAVMSGSLPKGLNTDYYTDIVRLAKEQGILTILDSSGQSLEEVLISNEKPTVIKPNIDELSQLLNYKVTNDIKELKAAVSQPIFNDIEWIIVSLGSEGAFAKHNQKFYKVNIPNIKVVNPVGSGDSTVAGIASGLIHQQTDEELLKKANAFGMLNAMEQQTGHINTDKFDEIFKQIEVIEV</sequence>
<evidence type="ECO:0000255" key="1">
    <source>
        <dbReference type="HAMAP-Rule" id="MF_01557"/>
    </source>
</evidence>
<proteinExistence type="inferred from homology"/>
<protein>
    <recommendedName>
        <fullName evidence="1">Tagatose-6-phosphate kinase</fullName>
        <ecNumber evidence="1">2.7.1.144</ecNumber>
    </recommendedName>
    <alternativeName>
        <fullName evidence="1">Phosphotagatokinase</fullName>
    </alternativeName>
</protein>
<organism>
    <name type="scientific">Staphylococcus epidermidis (strain ATCC 12228 / FDA PCI 1200)</name>
    <dbReference type="NCBI Taxonomy" id="176280"/>
    <lineage>
        <taxon>Bacteria</taxon>
        <taxon>Bacillati</taxon>
        <taxon>Bacillota</taxon>
        <taxon>Bacilli</taxon>
        <taxon>Bacillales</taxon>
        <taxon>Staphylococcaceae</taxon>
        <taxon>Staphylococcus</taxon>
    </lineage>
</organism>